<comment type="function">
    <text evidence="1 6 8 9 11 14 15 18 20 21 22">Endoribonuclease involved in various biological functions such as cellular inflammatory response and immune homeostasis, glial differentiation of neuroprogenitor cells, cell death of cardiomyocytes, adipogenesis and angiogenesis. Functions as an endoribonuclease involved in mRNA decay (PubMed:19909337). Modulates the inflammatory response by promoting the degradation of a set of translationally active cytokine-induced inflammation-related mRNAs, such as IL6 and IL12B, during the early phase of inflammation (PubMed:26320658). Prevents aberrant T-cell-mediated immune reaction by degradation of multiple mRNAs controlling T-cell activation, such as those encoding cytokines (IL6 and IL2), cell surface receptors (ICOS, TNFRSF4 and TNFR2) and transcription factor (REL) (By similarity). Inhibits cooperatively with ZC3H12A the differentiation of helper T cells Th17 in lungs. They repress target mRNA encoding the Th17 cell-promoting factors IL6, ICOS, REL, IRF4, NFKBID and NFKBIZ. The cooperation requires RNA-binding by RC3H1 and the nuclease activity of ZC3H12A (By similarity). Together with RC3H1, destabilizes TNFRSF4/OX40 mRNA by binding to the conserved stem loop structure in its 3'UTR (By similarity). Self regulates by destabilizing its own mRNA (By similarity). Cleaves mRNA harboring a stem-loop (SL), often located in their 3'-UTRs, during the early phase of inflammation in a helicase UPF1-dependent manner (PubMed:19909337, PubMed:22561375, PubMed:26134560, PubMed:26320658). Plays a role in the inhibition of microRNAs (miRNAs) biogenesis (PubMed:22055188). Cleaves the terminal loop of a set of precursor miRNAs (pre-miRNAs) important for the regulation of the inflammatory response leading to their degradation, and thus preventing the biosynthesis of mature miRNAs (PubMed:22055188). Also plays a role in promoting angiogenesis in response to inflammatory cytokines by inhibiting the production of antiangiogenic microRNAs via its anti-dicer RNase activity (PubMed:24048733). Affects the overall ubiquitination of cellular proteins (By similarity). Positively regulates deubiquitinase activity promoting the cleavage at 'Lys-48'- and 'Lys-63'-linked polyubiquitin chains on TNF receptor-associated factors (TRAFs), preventing JNK and NF-kappa-B signaling pathway activation, and hence negatively regulating macrophage-mediated inflammatory response and immune homeostasis (By similarity). Also induces deubiquitination of the transcription factor HIF1A, probably leading to its stabilization and nuclear import, thereby positively regulating the expression of proangiogenic HIF1A-targeted genes (PubMed:24048733). Involved in a TANK-dependent negative feedback response to attenuate NF-kappaB activation through the deubiquitination of IKBKG or TRAF6 in response to interleukin-1-beta (IL1B) stimulation or upon DNA damage (PubMed:25861989). Prevents stress granule (SGs) formation and promotes macrophage apoptosis under stress conditions, including arsenite-induced oxidative stress, heat shock and energy deprivation (By similarity). Plays a role in the regulation of macrophage polarization; promotes IL4-induced polarization of macrophages M1 into anti-inflammatory M2 state (By similarity). May also act as a transcription factor that regulates the expression of multiple genes involved in inflammatory response, angiogenesis, adipogenesis and apoptosis (PubMed:16574901, PubMed:18364357). Functions as a positive regulator of glial differentiation of neuroprogenitor cells through an amyloid precursor protein (APP)-dependent signaling pathway (PubMed:19185603). Attenuates septic myocardial contractile dysfunction in response to lipopolysaccharide (LPS) by reducing I-kappa-B-kinase (IKK)-mediated NF-kappa-B activation, and hence myocardial pro-inflammatory cytokine production (By similarity).</text>
</comment>
<comment type="function">
    <text evidence="17">(Microbial infection) Binds to Japanese encephalitis virus (JEV) and Dengue virus (DEN) RNAs.</text>
</comment>
<comment type="function">
    <text evidence="19">(Microbial infection) Exhibits antiviral activity against HIV-1 in lymphocytes by decreasing the abundance of HIV-1 viral RNA species.</text>
</comment>
<comment type="cofactor">
    <cofactor evidence="15">
        <name>Mg(2+)</name>
        <dbReference type="ChEBI" id="CHEBI:18420"/>
    </cofactor>
    <text evidence="15">Mg(2+) is required for RNase activity (PubMed:22561375).</text>
</comment>
<comment type="subunit">
    <text evidence="1 13 14 17 20 21">Oligomer (PubMed:22055188, PubMed:23355615). Found in a deubiquitination complex with TANK, USP10 and ZC3H12A; this complex inhibits genotoxic stress- or interleukin-1-beta-mediated NF-kappaB activation by promoting IKBKG or TRAF6 deubiquitination (PubMed:25861989). Interacts with IKBKG; this interaction increases in response to DNA damage (PubMed:25861989). Interacts with TANK; this interaction increases in response to DNA damage and serves as a bridge to anchor both TANK and USP10 into a deubiquitinating complex (PubMed:25861989). Interacts with TRAF6; this interaction increases in response to DNA damage and is stimulated by TANK (PubMed:25861989). Interacts with USP10; this interaction increases in response to DNA damage and serves as a bridge to anchor both TANK and USP10 into a deubiquitinating complex (PubMed:25861989). Interacts with ZC3H12D (PubMed:26134560). Interacts with TNRC6A (PubMed:26134560). Interacts with IKBKB/IKKB (PubMed:22037600). Interacts with IKBKB/IKKB. Interacts with BTRC; the interaction occurs when ZC3H12A is phosphorylated in a IKBKB/IKKB-dependent manner (By similarity). Interacts with IRAK1; this interaction increases the interaction between ZC3H12A and IKBKB/IKKB (By similarity). Interacts with UPF1; this interaction occurs in a mRNA translationally active- and termination-dependent manner and is essential for ZC3H12A-mediated degradation of target mRNAs (By similarity). Associates with ribosomes (By similarity). Interacts with ubiquitin (By similarity).</text>
</comment>
<comment type="subunit">
    <text evidence="17">(Microbial infection) Oligomerization is necessary for antiviral activity (PubMed:23355615).</text>
</comment>
<comment type="interaction">
    <interactant intactId="EBI-747793">
        <id>Q5D1E8</id>
    </interactant>
    <interactant intactId="EBI-720250">
        <id>Q9NZD4</id>
        <label>AHSP</label>
    </interactant>
    <organismsDiffer>false</organismsDiffer>
    <experiments>4</experiments>
</comment>
<comment type="interaction">
    <interactant intactId="EBI-747793">
        <id>Q5D1E8</id>
    </interactant>
    <interactant intactId="EBI-307461">
        <id>Q9Y297</id>
        <label>BTRC</label>
    </interactant>
    <organismsDiffer>false</organismsDiffer>
    <experiments>3</experiments>
</comment>
<comment type="interaction">
    <interactant intactId="EBI-747793">
        <id>Q5D1E8</id>
    </interactant>
    <interactant intactId="EBI-11514233">
        <id>P59910</id>
        <label>DNAJB13</label>
    </interactant>
    <organismsDiffer>false</organismsDiffer>
    <experiments>3</experiments>
</comment>
<comment type="interaction">
    <interactant intactId="EBI-747793">
        <id>Q5D1E8</id>
    </interactant>
    <interactant intactId="EBI-81279">
        <id>Q9Y6K9</id>
        <label>IKBKG</label>
    </interactant>
    <organismsDiffer>false</organismsDiffer>
    <experiments>2</experiments>
</comment>
<comment type="interaction">
    <interactant intactId="EBI-747793">
        <id>Q5D1E8</id>
    </interactant>
    <interactant intactId="EBI-447733">
        <id>O43187</id>
        <label>IRAK2</label>
    </interactant>
    <organismsDiffer>false</organismsDiffer>
    <experiments>2</experiments>
</comment>
<comment type="interaction">
    <interactant intactId="EBI-747793">
        <id>Q5D1E8</id>
    </interactant>
    <interactant intactId="EBI-10181968">
        <id>Q7Z4N8</id>
        <label>P4HA3</label>
    </interactant>
    <organismsDiffer>false</organismsDiffer>
    <experiments>6</experiments>
</comment>
<comment type="interaction">
    <interactant intactId="EBI-747793">
        <id>Q5D1E8</id>
    </interactant>
    <interactant intactId="EBI-347161">
        <id>P84022</id>
        <label>SMAD3</label>
    </interactant>
    <organismsDiffer>false</organismsDiffer>
    <experiments>2</experiments>
</comment>
<comment type="interaction">
    <interactant intactId="EBI-747793">
        <id>Q5D1E8</id>
    </interactant>
    <interactant intactId="EBI-2510389">
        <id>Q14694</id>
        <label>USP10</label>
    </interactant>
    <organismsDiffer>false</organismsDiffer>
    <experiments>5</experiments>
</comment>
<comment type="subcellular location">
    <subcellularLocation>
        <location evidence="6">Nucleus</location>
    </subcellularLocation>
    <subcellularLocation>
        <location evidence="7 11 14">Cytoplasm</location>
    </subcellularLocation>
    <subcellularLocation>
        <location evidence="14 21">Cytoplasm</location>
        <location evidence="14 21">P-body</location>
    </subcellularLocation>
    <subcellularLocation>
        <location evidence="1">Rough endoplasmic reticulum membrane</location>
        <topology evidence="1">Peripheral membrane protein</topology>
        <orientation evidence="1">Cytoplasmic side</orientation>
    </subcellularLocation>
    <subcellularLocation>
        <location evidence="1">Cytoplasmic granule</location>
    </subcellularLocation>
    <text evidence="14 21">Predominantly localized in the cytoplasm. Colocalizes with GW182 on many granule-like structures, probably corresponding to cytoplasmic GW bodies (GWBs), also called processing bodies (P bodies). Colocalizes with calnexin on the surface of the rough endoplasmic reticulum (RER) membrane and with translationally active polysomes (By similarity). Colocalizes with ZC3H12D in cytoplasmic mRNA processing P-body, also known as GW bodies (GWBs) (PubMed:22055188, PubMed:26134560).</text>
</comment>
<comment type="tissue specificity">
    <text evidence="6 11">Expressed in heart, placenta, spleen, kidney, liver and lung (PubMed:19909337). Expressed in leukocytes (PubMed:19909337). Expressed in monocyte (PubMed:16574901).</text>
</comment>
<comment type="induction">
    <text evidence="6 7 8 9 10 11 12 13 16 22">Up-regulated by the transcription factor ELK1 in a interleukin IL1B-dependent manner through activation of the NF-kappa-B and ERK signaling pathways (PubMed:19747262, PubMed:20137095, PubMed:22037600). Up-regulated by chemokine CCL2 in endothelial cells and in peripheral blood monocytes (PubMed:16574901, PubMed:18364357). Up-regulated in activated T lymphocytes (PubMed:23185455). Up-regulated by phorbol 12-myristate 13-acetate (PMA) in primary T lymphocytes (PubMed:19909337, PubMed:23185455). Up-regulated by interleukin IL17 in keratinocytes (PubMed:26320658). Up-regulated by lipopolysaccharide (LPS) (PubMed:19909337). Up-regulated by tumor necrosis factor TNF-alpha and interleukin IL1 in acute monocytic leukemia cell line THP-1 cells (PubMed:18178554, PubMed:19909337). Up-regulated by amyloid precursor protein (APP) (PubMed:19185603).</text>
</comment>
<comment type="induction">
    <text evidence="17">(Microbial infection) Up-regulated in response to Japanese encephalitis virus (JEV) and dengue virus (DEN) infections (PubMed:23355615).</text>
</comment>
<comment type="domain">
    <text evidence="14">The C3H1-type zinc finger domain and C-terminal region are necessary for pre-miRNA binding (PubMed:22055188). The C-terminal region and proline-rich domain are necessary for oligomerization (PubMed:22055188).</text>
</comment>
<comment type="domain">
    <text evidence="17">(Microbial infection) The C3H1-type zinc finger domain is necessary for JEV and DEN viral RNA-binding and antiviral activity (PubMed:23355615).</text>
</comment>
<comment type="PTM">
    <text evidence="1">Phosphorylated by IRAK1; phosphorylation is necessary for subsequent phosphorylation by the I-kappa-B-kinase (IKK) complex. Phosphorylated by I-kappa-B-kinase (IKK) subunits IKBKB/IKKB and CHUK/IKKA at Ser-438 and Ser-442; these phosphorylations promote ubiquitin proteasome-mediated degradation of ZC3H12A and hence facilitates rapid and robust production of IL-6 mRNA in response to toll-like receptor (TLR) or IL-1 receptor stimuli (By similarity).</text>
</comment>
<comment type="PTM">
    <text evidence="19">(Microbial infection) Rapidly degraded in activated T-cells in response to phorbol 13-acetate 12-myristate (PMA) during HIV-1 viral infection (PubMed:24191027).</text>
</comment>
<comment type="PTM">
    <text evidence="1">Ubiquitinated; ubiquitination is induced in response to interleukin IL1 receptor stimuli in a IKBKB/IKKB and IRAK1-dependent manner, leading to proteasome-mediated degradation (By similarity).</text>
</comment>
<comment type="PTM">
    <text evidence="1">Proteolytically cleaved between Arg-111 and Arg-214 by MALT1 in activated T-cells; cleavage at Arg-111 is critical for promoting ZC3H12A degradation in response to T-cell receptor (TCR) stimulation, and hence is necessary for prolonging the stability of a set of mRNAs controlling T-cell activation and Th17 cell differentiation.</text>
</comment>
<comment type="disease">
    <text evidence="6">Increased expression of ZC3H12A is associated with ischemic heart disease (PubMed:16574901).</text>
</comment>
<comment type="similarity">
    <text evidence="26">Belongs to the ZC3H12 family.</text>
</comment>
<comment type="caution">
    <text evidence="27">Was originally proposed to bind to DNA and act as transcription factor.</text>
</comment>
<organism>
    <name type="scientific">Homo sapiens</name>
    <name type="common">Human</name>
    <dbReference type="NCBI Taxonomy" id="9606"/>
    <lineage>
        <taxon>Eukaryota</taxon>
        <taxon>Metazoa</taxon>
        <taxon>Chordata</taxon>
        <taxon>Craniata</taxon>
        <taxon>Vertebrata</taxon>
        <taxon>Euteleostomi</taxon>
        <taxon>Mammalia</taxon>
        <taxon>Eutheria</taxon>
        <taxon>Euarchontoglires</taxon>
        <taxon>Primates</taxon>
        <taxon>Haplorrhini</taxon>
        <taxon>Catarrhini</taxon>
        <taxon>Hominidae</taxon>
        <taxon>Homo</taxon>
    </lineage>
</organism>
<keyword id="KW-0002">3D-structure</keyword>
<keyword id="KW-0037">Angiogenesis</keyword>
<keyword id="KW-0051">Antiviral defense</keyword>
<keyword id="KW-0053">Apoptosis</keyword>
<keyword id="KW-0963">Cytoplasm</keyword>
<keyword id="KW-0217">Developmental protein</keyword>
<keyword id="KW-0221">Differentiation</keyword>
<keyword id="KW-0227">DNA damage</keyword>
<keyword id="KW-0238">DNA-binding</keyword>
<keyword id="KW-0255">Endonuclease</keyword>
<keyword id="KW-0256">Endoplasmic reticulum</keyword>
<keyword id="KW-0945">Host-virus interaction</keyword>
<keyword id="KW-0378">Hydrolase</keyword>
<keyword id="KW-0391">Immunity</keyword>
<keyword id="KW-0395">Inflammatory response</keyword>
<keyword id="KW-0460">Magnesium</keyword>
<keyword id="KW-0472">Membrane</keyword>
<keyword id="KW-0479">Metal-binding</keyword>
<keyword id="KW-0524">Neurogenesis</keyword>
<keyword id="KW-0540">Nuclease</keyword>
<keyword id="KW-0539">Nucleus</keyword>
<keyword id="KW-0597">Phosphoprotein</keyword>
<keyword id="KW-1267">Proteomics identification</keyword>
<keyword id="KW-1185">Reference proteome</keyword>
<keyword id="KW-0678">Repressor</keyword>
<keyword id="KW-0694">RNA-binding</keyword>
<keyword id="KW-0346">Stress response</keyword>
<keyword id="KW-0804">Transcription</keyword>
<keyword id="KW-0805">Transcription regulation</keyword>
<keyword id="KW-0832">Ubl conjugation</keyword>
<keyword id="KW-0862">Zinc</keyword>
<keyword id="KW-0863">Zinc-finger</keyword>
<reference evidence="26 30" key="1">
    <citation type="journal article" date="2006" name="Circ. Res.">
        <title>Monocyte chemoattractant protein-1 induces a novel transcription factor that causes cardiac myocyte apoptosis and ventricular dysfunction.</title>
        <authorList>
            <person name="Zhou L."/>
            <person name="Azfer A."/>
            <person name="Niu J."/>
            <person name="Graham S."/>
            <person name="Choudhury M."/>
            <person name="Adamski F.M."/>
            <person name="Younce C."/>
            <person name="Binkley P.F."/>
            <person name="Kolattukudy P.E."/>
        </authorList>
    </citation>
    <scope>NUCLEOTIDE SEQUENCE [MRNA]</scope>
    <scope>FUNCTION AS A TRANSCRIPTION FACTOR</scope>
    <scope>SUBCELLULAR LOCATION</scope>
    <scope>INDUCTION</scope>
    <scope>TISSUE SPECIFICITY</scope>
    <scope>MUTAGENESIS OF LYS-311; CYS-312; LYS-317 AND CYS-318</scope>
    <scope>POSSIBLE INVOLVEMENT IN ISCHEMIC HEART DISEASE</scope>
</reference>
<reference evidence="26 32" key="2">
    <citation type="journal article" date="2004" name="Nat. Genet.">
        <title>Complete sequencing and characterization of 21,243 full-length human cDNAs.</title>
        <authorList>
            <person name="Ota T."/>
            <person name="Suzuki Y."/>
            <person name="Nishikawa T."/>
            <person name="Otsuki T."/>
            <person name="Sugiyama T."/>
            <person name="Irie R."/>
            <person name="Wakamatsu A."/>
            <person name="Hayashi K."/>
            <person name="Sato H."/>
            <person name="Nagai K."/>
            <person name="Kimura K."/>
            <person name="Makita H."/>
            <person name="Sekine M."/>
            <person name="Obayashi M."/>
            <person name="Nishi T."/>
            <person name="Shibahara T."/>
            <person name="Tanaka T."/>
            <person name="Ishii S."/>
            <person name="Yamamoto J."/>
            <person name="Saito K."/>
            <person name="Kawai Y."/>
            <person name="Isono Y."/>
            <person name="Nakamura Y."/>
            <person name="Nagahari K."/>
            <person name="Murakami K."/>
            <person name="Yasuda T."/>
            <person name="Iwayanagi T."/>
            <person name="Wagatsuma M."/>
            <person name="Shiratori A."/>
            <person name="Sudo H."/>
            <person name="Hosoiri T."/>
            <person name="Kaku Y."/>
            <person name="Kodaira H."/>
            <person name="Kondo H."/>
            <person name="Sugawara M."/>
            <person name="Takahashi M."/>
            <person name="Kanda K."/>
            <person name="Yokoi T."/>
            <person name="Furuya T."/>
            <person name="Kikkawa E."/>
            <person name="Omura Y."/>
            <person name="Abe K."/>
            <person name="Kamihara K."/>
            <person name="Katsuta N."/>
            <person name="Sato K."/>
            <person name="Tanikawa M."/>
            <person name="Yamazaki M."/>
            <person name="Ninomiya K."/>
            <person name="Ishibashi T."/>
            <person name="Yamashita H."/>
            <person name="Murakawa K."/>
            <person name="Fujimori K."/>
            <person name="Tanai H."/>
            <person name="Kimata M."/>
            <person name="Watanabe M."/>
            <person name="Hiraoka S."/>
            <person name="Chiba Y."/>
            <person name="Ishida S."/>
            <person name="Ono Y."/>
            <person name="Takiguchi S."/>
            <person name="Watanabe S."/>
            <person name="Yosida M."/>
            <person name="Hotuta T."/>
            <person name="Kusano J."/>
            <person name="Kanehori K."/>
            <person name="Takahashi-Fujii A."/>
            <person name="Hara H."/>
            <person name="Tanase T.-O."/>
            <person name="Nomura Y."/>
            <person name="Togiya S."/>
            <person name="Komai F."/>
            <person name="Hara R."/>
            <person name="Takeuchi K."/>
            <person name="Arita M."/>
            <person name="Imose N."/>
            <person name="Musashino K."/>
            <person name="Yuuki H."/>
            <person name="Oshima A."/>
            <person name="Sasaki N."/>
            <person name="Aotsuka S."/>
            <person name="Yoshikawa Y."/>
            <person name="Matsunawa H."/>
            <person name="Ichihara T."/>
            <person name="Shiohata N."/>
            <person name="Sano S."/>
            <person name="Moriya S."/>
            <person name="Momiyama H."/>
            <person name="Satoh N."/>
            <person name="Takami S."/>
            <person name="Terashima Y."/>
            <person name="Suzuki O."/>
            <person name="Nakagawa S."/>
            <person name="Senoh A."/>
            <person name="Mizoguchi H."/>
            <person name="Goto Y."/>
            <person name="Shimizu F."/>
            <person name="Wakebe H."/>
            <person name="Hishigaki H."/>
            <person name="Watanabe T."/>
            <person name="Sugiyama A."/>
            <person name="Takemoto M."/>
            <person name="Kawakami B."/>
            <person name="Yamazaki M."/>
            <person name="Watanabe K."/>
            <person name="Kumagai A."/>
            <person name="Itakura S."/>
            <person name="Fukuzumi Y."/>
            <person name="Fujimori Y."/>
            <person name="Komiyama M."/>
            <person name="Tashiro H."/>
            <person name="Tanigami A."/>
            <person name="Fujiwara T."/>
            <person name="Ono T."/>
            <person name="Yamada K."/>
            <person name="Fujii Y."/>
            <person name="Ozaki K."/>
            <person name="Hirao M."/>
            <person name="Ohmori Y."/>
            <person name="Kawabata A."/>
            <person name="Hikiji T."/>
            <person name="Kobatake N."/>
            <person name="Inagaki H."/>
            <person name="Ikema Y."/>
            <person name="Okamoto S."/>
            <person name="Okitani R."/>
            <person name="Kawakami T."/>
            <person name="Noguchi S."/>
            <person name="Itoh T."/>
            <person name="Shigeta K."/>
            <person name="Senba T."/>
            <person name="Matsumura K."/>
            <person name="Nakajima Y."/>
            <person name="Mizuno T."/>
            <person name="Morinaga M."/>
            <person name="Sasaki M."/>
            <person name="Togashi T."/>
            <person name="Oyama M."/>
            <person name="Hata H."/>
            <person name="Watanabe M."/>
            <person name="Komatsu T."/>
            <person name="Mizushima-Sugano J."/>
            <person name="Satoh T."/>
            <person name="Shirai Y."/>
            <person name="Takahashi Y."/>
            <person name="Nakagawa K."/>
            <person name="Okumura K."/>
            <person name="Nagase T."/>
            <person name="Nomura N."/>
            <person name="Kikuchi H."/>
            <person name="Masuho Y."/>
            <person name="Yamashita R."/>
            <person name="Nakai K."/>
            <person name="Yada T."/>
            <person name="Nakamura Y."/>
            <person name="Ohara O."/>
            <person name="Isogai T."/>
            <person name="Sugano S."/>
        </authorList>
    </citation>
    <scope>NUCLEOTIDE SEQUENCE [LARGE SCALE MRNA]</scope>
    <scope>VARIANT ASP-547</scope>
    <source>
        <tissue evidence="32">Artery</tissue>
    </source>
</reference>
<reference evidence="26 33" key="3">
    <citation type="submission" date="2004-06" db="EMBL/GenBank/DDBJ databases">
        <title>Cloning of human full open reading frames in Gateway(TM) system entry vector (pDONR201).</title>
        <authorList>
            <person name="Ebert L."/>
            <person name="Schick M."/>
            <person name="Neubert P."/>
            <person name="Schatten R."/>
            <person name="Henze S."/>
            <person name="Korn B."/>
        </authorList>
    </citation>
    <scope>NUCLEOTIDE SEQUENCE [LARGE SCALE MRNA]</scope>
    <scope>VARIANT ASP-547</scope>
</reference>
<reference evidence="31" key="4">
    <citation type="journal article" date="2006" name="Nature">
        <title>The DNA sequence and biological annotation of human chromosome 1.</title>
        <authorList>
            <person name="Gregory S.G."/>
            <person name="Barlow K.F."/>
            <person name="McLay K.E."/>
            <person name="Kaul R."/>
            <person name="Swarbreck D."/>
            <person name="Dunham A."/>
            <person name="Scott C.E."/>
            <person name="Howe K.L."/>
            <person name="Woodfine K."/>
            <person name="Spencer C.C.A."/>
            <person name="Jones M.C."/>
            <person name="Gillson C."/>
            <person name="Searle S."/>
            <person name="Zhou Y."/>
            <person name="Kokocinski F."/>
            <person name="McDonald L."/>
            <person name="Evans R."/>
            <person name="Phillips K."/>
            <person name="Atkinson A."/>
            <person name="Cooper R."/>
            <person name="Jones C."/>
            <person name="Hall R.E."/>
            <person name="Andrews T.D."/>
            <person name="Lloyd C."/>
            <person name="Ainscough R."/>
            <person name="Almeida J.P."/>
            <person name="Ambrose K.D."/>
            <person name="Anderson F."/>
            <person name="Andrew R.W."/>
            <person name="Ashwell R.I.S."/>
            <person name="Aubin K."/>
            <person name="Babbage A.K."/>
            <person name="Bagguley C.L."/>
            <person name="Bailey J."/>
            <person name="Beasley H."/>
            <person name="Bethel G."/>
            <person name="Bird C.P."/>
            <person name="Bray-Allen S."/>
            <person name="Brown J.Y."/>
            <person name="Brown A.J."/>
            <person name="Buckley D."/>
            <person name="Burton J."/>
            <person name="Bye J."/>
            <person name="Carder C."/>
            <person name="Chapman J.C."/>
            <person name="Clark S.Y."/>
            <person name="Clarke G."/>
            <person name="Clee C."/>
            <person name="Cobley V."/>
            <person name="Collier R.E."/>
            <person name="Corby N."/>
            <person name="Coville G.J."/>
            <person name="Davies J."/>
            <person name="Deadman R."/>
            <person name="Dunn M."/>
            <person name="Earthrowl M."/>
            <person name="Ellington A.G."/>
            <person name="Errington H."/>
            <person name="Frankish A."/>
            <person name="Frankland J."/>
            <person name="French L."/>
            <person name="Garner P."/>
            <person name="Garnett J."/>
            <person name="Gay L."/>
            <person name="Ghori M.R.J."/>
            <person name="Gibson R."/>
            <person name="Gilby L.M."/>
            <person name="Gillett W."/>
            <person name="Glithero R.J."/>
            <person name="Grafham D.V."/>
            <person name="Griffiths C."/>
            <person name="Griffiths-Jones S."/>
            <person name="Grocock R."/>
            <person name="Hammond S."/>
            <person name="Harrison E.S.I."/>
            <person name="Hart E."/>
            <person name="Haugen E."/>
            <person name="Heath P.D."/>
            <person name="Holmes S."/>
            <person name="Holt K."/>
            <person name="Howden P.J."/>
            <person name="Hunt A.R."/>
            <person name="Hunt S.E."/>
            <person name="Hunter G."/>
            <person name="Isherwood J."/>
            <person name="James R."/>
            <person name="Johnson C."/>
            <person name="Johnson D."/>
            <person name="Joy A."/>
            <person name="Kay M."/>
            <person name="Kershaw J.K."/>
            <person name="Kibukawa M."/>
            <person name="Kimberley A.M."/>
            <person name="King A."/>
            <person name="Knights A.J."/>
            <person name="Lad H."/>
            <person name="Laird G."/>
            <person name="Lawlor S."/>
            <person name="Leongamornlert D.A."/>
            <person name="Lloyd D.M."/>
            <person name="Loveland J."/>
            <person name="Lovell J."/>
            <person name="Lush M.J."/>
            <person name="Lyne R."/>
            <person name="Martin S."/>
            <person name="Mashreghi-Mohammadi M."/>
            <person name="Matthews L."/>
            <person name="Matthews N.S.W."/>
            <person name="McLaren S."/>
            <person name="Milne S."/>
            <person name="Mistry S."/>
            <person name="Moore M.J.F."/>
            <person name="Nickerson T."/>
            <person name="O'Dell C.N."/>
            <person name="Oliver K."/>
            <person name="Palmeiri A."/>
            <person name="Palmer S.A."/>
            <person name="Parker A."/>
            <person name="Patel D."/>
            <person name="Pearce A.V."/>
            <person name="Peck A.I."/>
            <person name="Pelan S."/>
            <person name="Phelps K."/>
            <person name="Phillimore B.J."/>
            <person name="Plumb R."/>
            <person name="Rajan J."/>
            <person name="Raymond C."/>
            <person name="Rouse G."/>
            <person name="Saenphimmachak C."/>
            <person name="Sehra H.K."/>
            <person name="Sheridan E."/>
            <person name="Shownkeen R."/>
            <person name="Sims S."/>
            <person name="Skuce C.D."/>
            <person name="Smith M."/>
            <person name="Steward C."/>
            <person name="Subramanian S."/>
            <person name="Sycamore N."/>
            <person name="Tracey A."/>
            <person name="Tromans A."/>
            <person name="Van Helmond Z."/>
            <person name="Wall M."/>
            <person name="Wallis J.M."/>
            <person name="White S."/>
            <person name="Whitehead S.L."/>
            <person name="Wilkinson J.E."/>
            <person name="Willey D.L."/>
            <person name="Williams H."/>
            <person name="Wilming L."/>
            <person name="Wray P.W."/>
            <person name="Wu Z."/>
            <person name="Coulson A."/>
            <person name="Vaudin M."/>
            <person name="Sulston J.E."/>
            <person name="Durbin R.M."/>
            <person name="Hubbard T."/>
            <person name="Wooster R."/>
            <person name="Dunham I."/>
            <person name="Carter N.P."/>
            <person name="McVean G."/>
            <person name="Ross M.T."/>
            <person name="Harrow J."/>
            <person name="Olson M.V."/>
            <person name="Beck S."/>
            <person name="Rogers J."/>
            <person name="Bentley D.R."/>
        </authorList>
    </citation>
    <scope>NUCLEOTIDE SEQUENCE [LARGE SCALE GENOMIC DNA]</scope>
</reference>
<reference evidence="26 33" key="5">
    <citation type="submission" date="2005-09" db="EMBL/GenBank/DDBJ databases">
        <authorList>
            <person name="Mural R.J."/>
            <person name="Istrail S."/>
            <person name="Sutton G.G."/>
            <person name="Florea L."/>
            <person name="Halpern A.L."/>
            <person name="Mobarry C.M."/>
            <person name="Lippert R."/>
            <person name="Walenz B."/>
            <person name="Shatkay H."/>
            <person name="Dew I."/>
            <person name="Miller J.R."/>
            <person name="Flanigan M.J."/>
            <person name="Edwards N.J."/>
            <person name="Bolanos R."/>
            <person name="Fasulo D."/>
            <person name="Halldorsson B.V."/>
            <person name="Hannenhalli S."/>
            <person name="Turner R."/>
            <person name="Yooseph S."/>
            <person name="Lu F."/>
            <person name="Nusskern D.R."/>
            <person name="Shue B.C."/>
            <person name="Zheng X.H."/>
            <person name="Zhong F."/>
            <person name="Delcher A.L."/>
            <person name="Huson D.H."/>
            <person name="Kravitz S.A."/>
            <person name="Mouchard L."/>
            <person name="Reinert K."/>
            <person name="Remington K.A."/>
            <person name="Clark A.G."/>
            <person name="Waterman M.S."/>
            <person name="Eichler E.E."/>
            <person name="Adams M.D."/>
            <person name="Hunkapiller M.W."/>
            <person name="Myers E.W."/>
            <person name="Venter J.C."/>
        </authorList>
    </citation>
    <scope>NUCLEOTIDE SEQUENCE [LARGE SCALE GENOMIC DNA]</scope>
</reference>
<reference evidence="26 29" key="6">
    <citation type="journal article" date="2004" name="Genome Res.">
        <title>The status, quality, and expansion of the NIH full-length cDNA project: the Mammalian Gene Collection (MGC).</title>
        <authorList>
            <consortium name="The MGC Project Team"/>
        </authorList>
    </citation>
    <scope>NUCLEOTIDE SEQUENCE [LARGE SCALE MRNA]</scope>
    <scope>VARIANT ASP-547</scope>
    <source>
        <tissue evidence="29">Kidney</tissue>
    </source>
</reference>
<reference key="7">
    <citation type="journal article" date="2008" name="J. Biol. Chem.">
        <title>A novel CCCH-zinc finger protein family regulates proinflammatory activation of macrophages.</title>
        <authorList>
            <person name="Liang J."/>
            <person name="Wang J."/>
            <person name="Azfer A."/>
            <person name="Song W."/>
            <person name="Tromp G."/>
            <person name="Kolattukudy P.E."/>
            <person name="Fu M."/>
        </authorList>
    </citation>
    <scope>SUBCELLULAR LOCATION</scope>
    <scope>INDUCTION</scope>
</reference>
<reference evidence="26" key="8">
    <citation type="journal article" date="2008" name="J. Biol. Chem.">
        <title>Monocyte chemotactic protein (MCP)-1 promotes angiogenesis via a novel transcription factor, MCP-1-induced protein (MCPIP).</title>
        <authorList>
            <person name="Niu J."/>
            <person name="Azfer A."/>
            <person name="Zhelyabovska O."/>
            <person name="Fatma S."/>
            <person name="Kolattukudy P.E."/>
        </authorList>
    </citation>
    <scope>FUNCTION AS A TRANSCRIPTION FACTOR</scope>
    <scope>INDUCTION</scope>
    <scope>CHROMATIN BINDING</scope>
    <scope>DNA-BINDING</scope>
</reference>
<reference key="9">
    <citation type="journal article" date="2009" name="Brain Res. Bull.">
        <title>MCP-1 involvement in glial differentiation of neuroprogenitor cells through APP signaling.</title>
        <authorList>
            <person name="Vrotsos E.G."/>
            <person name="Kolattukudy P.E."/>
            <person name="Sugaya K."/>
        </authorList>
    </citation>
    <scope>FUNCTION</scope>
    <scope>INDUCTION</scope>
</reference>
<reference key="10">
    <citation type="journal article" date="2009" name="FEBS J.">
        <title>Regulatory feedback loop between NF-kappaB and MCP-1-induced protein 1 RNase.</title>
        <authorList>
            <person name="Skalniak L."/>
            <person name="Mizgalska D."/>
            <person name="Zarebski A."/>
            <person name="Wyrzykowska P."/>
            <person name="Koj A."/>
            <person name="Jura J."/>
        </authorList>
    </citation>
    <scope>INDUCTION</scope>
</reference>
<reference key="11">
    <citation type="journal article" date="2009" name="FEBS J.">
        <title>Interleukin-1-inducible MCPIP protein has structural and functional properties of RNase and participates in degradation of IL-1beta mRNA.</title>
        <authorList>
            <person name="Mizgalska D."/>
            <person name="Wegrzyn P."/>
            <person name="Murzyn K."/>
            <person name="Kasza A."/>
            <person name="Koj A."/>
            <person name="Jura J."/>
            <person name="Jarzab B."/>
            <person name="Jura J."/>
        </authorList>
    </citation>
    <scope>FUNCTION AS AN ENDORIBONUCLEASE</scope>
    <scope>SUBCELLULAR LOCATION</scope>
    <scope>INDUCTION</scope>
    <scope>TISSUE SPECIFICITY</scope>
    <scope>MUTAGENESIS OF ASP-141 AND ASP-226</scope>
</reference>
<reference key="12">
    <citation type="journal article" date="2010" name="BMC Mol. Biol.">
        <title>Transcription factors Elk-1 and SRF are engaged in IL1-dependent regulation of ZC3H12A expression.</title>
        <authorList>
            <person name="Kasza A."/>
            <person name="Wyrzykowska P."/>
            <person name="Horwacik I."/>
            <person name="Tymoszuk P."/>
            <person name="Mizgalska D."/>
            <person name="Palmer K."/>
            <person name="Rokita H."/>
            <person name="Sharrocks A.D."/>
            <person name="Jura J."/>
        </authorList>
    </citation>
    <scope>INDUCTION</scope>
</reference>
<reference key="13">
    <citation type="journal article" date="2011" name="Mol. Cell">
        <title>MCPIP1 ribonuclease antagonizes dicer and terminates microRNA biogenesis through precursor microRNA degradation.</title>
        <authorList>
            <person name="Suzuki H.I."/>
            <person name="Arase M."/>
            <person name="Matsuyama H."/>
            <person name="Choi Y.L."/>
            <person name="Ueno T."/>
            <person name="Mano H."/>
            <person name="Sugimoto K."/>
            <person name="Miyazono K."/>
        </authorList>
    </citation>
    <scope>FUNCTION AS AN ENDORIBONUCLEASE</scope>
    <scope>CATALYTIC ACTIVITY</scope>
    <scope>SUBUNIT</scope>
    <scope>RNA-BINDING</scope>
    <scope>SUBCELLULAR LOCATION</scope>
    <scope>DOMAIN</scope>
    <scope>MUTAGENESIS OF ASP-141 AND CYS-306</scope>
</reference>
<reference key="14">
    <citation type="journal article" date="2011" name="Nat. Immunol.">
        <title>The IkappaB kinase complex regulates the stability of cytokine-encoding mRNA induced by TLR-IL-1R by controlling degradation of regnase-1.</title>
        <authorList>
            <person name="Iwasaki H."/>
            <person name="Takeuchi O."/>
            <person name="Teraguchi S."/>
            <person name="Matsushita K."/>
            <person name="Uehata T."/>
            <person name="Kuniyoshi K."/>
            <person name="Satoh T."/>
            <person name="Saitoh T."/>
            <person name="Matsushita M."/>
            <person name="Standley D.M."/>
            <person name="Akira S."/>
        </authorList>
    </citation>
    <scope>INTERACTION WITH IKBKB</scope>
    <scope>INDUCTION</scope>
</reference>
<reference key="15">
    <citation type="journal article" date="2012" name="PLoS ONE">
        <title>MCPIP1 down-regulates IL-2 expression through an ARE-independent pathway.</title>
        <authorList>
            <person name="Li M."/>
            <person name="Cao W."/>
            <person name="Liu H."/>
            <person name="Zhang W."/>
            <person name="Liu X."/>
            <person name="Cai Z."/>
            <person name="Guo J."/>
            <person name="Wang X."/>
            <person name="Hui Z."/>
            <person name="Zhang H."/>
            <person name="Wang J."/>
            <person name="Wang L."/>
        </authorList>
    </citation>
    <scope>INDUCTION</scope>
</reference>
<reference key="16">
    <citation type="journal article" date="2013" name="Am. J. Physiol.">
        <title>Antidicer RNase activity of monocyte chemotactic protein-induced protein-1 is critical for inducing angiogenesis.</title>
        <authorList>
            <person name="Roy A."/>
            <person name="Zhang M."/>
            <person name="Saad Y."/>
            <person name="Kolattukudy P.E."/>
        </authorList>
    </citation>
    <scope>FUNCTION AS AN ENDORIBONUCLEASE</scope>
</reference>
<reference key="17">
    <citation type="journal article" date="2013" name="Biochim. Biophys. Acta">
        <title>mRNA degradation by the endoribonuclease Regnase-1/ZC3H12a/MCPIP-1.</title>
        <authorList>
            <person name="Uehata T."/>
            <person name="Akira S."/>
        </authorList>
    </citation>
    <scope>REVIEW</scope>
</reference>
<reference key="18">
    <citation type="journal article" date="2013" name="J. Proteome Res.">
        <title>Toward a comprehensive characterization of a human cancer cell phosphoproteome.</title>
        <authorList>
            <person name="Zhou H."/>
            <person name="Di Palma S."/>
            <person name="Preisinger C."/>
            <person name="Peng M."/>
            <person name="Polat A.N."/>
            <person name="Heck A.J."/>
            <person name="Mohammed S."/>
        </authorList>
    </citation>
    <scope>PHOSPHORYLATION [LARGE SCALE ANALYSIS] AT SER-99 AND SER-344</scope>
    <scope>IDENTIFICATION BY MASS SPECTROMETRY [LARGE SCALE ANALYSIS]</scope>
    <source>
        <tissue>Cervix carcinoma</tissue>
        <tissue>Erythroleukemia</tissue>
    </source>
</reference>
<reference key="19">
    <citation type="journal article" date="2013" name="Nucleic Acids Res.">
        <title>MCPIP1 ribonuclease exhibits broad-spectrum antiviral effects through viral RNA binding and degradation.</title>
        <authorList>
            <person name="Lin R.J."/>
            <person name="Chien H.L."/>
            <person name="Lin S.Y."/>
            <person name="Chang B.L."/>
            <person name="Yu H.P."/>
            <person name="Tang W.C."/>
            <person name="Lin Y.L."/>
        </authorList>
    </citation>
    <scope>FUNCTION AS AN ENDORIBONUCLEASE (MICROBIAL INFECTION)</scope>
    <scope>SUBUNIT (MICROBIAL INFECTION)</scope>
    <scope>RNA-BINDING</scope>
    <scope>DOMAIN (MICROBIAL INFECTION)</scope>
    <scope>INDUCTION (MICROBIAL INFECTION)</scope>
    <scope>MUTAGENESIS OF ASP-141; CYS-157; ASP-225; ASP-226 AND CYS-306</scope>
</reference>
<reference key="20">
    <citation type="journal article" date="2013" name="Proc. Natl. Acad. Sci. U.S.A.">
        <title>MCPIP1 restricts HIV infection and is rapidly degraded in activated CD4+ T cells.</title>
        <authorList>
            <person name="Liu S."/>
            <person name="Qiu C."/>
            <person name="Miao R."/>
            <person name="Zhou J."/>
            <person name="Lee A."/>
            <person name="Liu B."/>
            <person name="Lester S.N."/>
            <person name="Fu W."/>
            <person name="Zhu L."/>
            <person name="Zhang L."/>
            <person name="Xu J."/>
            <person name="Fan D."/>
            <person name="Li K."/>
            <person name="Fu M."/>
            <person name="Wang T."/>
        </authorList>
    </citation>
    <scope>FUNCTION AS AN ENDORIBONUCLEASE (MICROBIAL INFECTION)</scope>
    <scope>DEGRADATION (MICROBIAL INFECTION)</scope>
    <scope>MUTAGENESIS OF ASP-141; ASP-225; ASP-226 AND CYS-306</scope>
</reference>
<reference key="21">
    <citation type="journal article" date="2015" name="Immunity">
        <title>MCPIP1 endoribonuclease activity negatively regulates interleukin-17-mediated signaling and inflammation.</title>
        <authorList>
            <person name="Garg A.V."/>
            <person name="Amatya N."/>
            <person name="Chen K."/>
            <person name="Cruz J.A."/>
            <person name="Grover P."/>
            <person name="Whibley N."/>
            <person name="Conti H.R."/>
            <person name="Hernandez Mir G."/>
            <person name="Sirakova T."/>
            <person name="Childs E.C."/>
            <person name="Smithgall T.E."/>
            <person name="Biswas P.S."/>
            <person name="Kolls J.K."/>
            <person name="McGeachy M.J."/>
            <person name="Kolattukudy P.E."/>
            <person name="Gaffen S.L."/>
        </authorList>
    </citation>
    <scope>FUNCTION AS AN ENDORIBONUCLEASE IN INFLAMMATION</scope>
    <scope>INDUCTION</scope>
    <scope>MUTAGENESIS OF ASP-141; ASP-225; ASP-226 AND CYS-306</scope>
</reference>
<reference key="22">
    <citation type="journal article" date="2015" name="J. Biol. Chem.">
        <title>TRAF family member-associated NF-kappaB activator (TANK) inhibits genotoxic nuclear factor kappaB activation by facilitating deubiquitinase USP10-dependent deubiquitination of TRAF6 ligase.</title>
        <authorList>
            <person name="Wang W."/>
            <person name="Huang X."/>
            <person name="Xin H.B."/>
            <person name="Fu M."/>
            <person name="Xue A."/>
            <person name="Wu Z.H."/>
        </authorList>
    </citation>
    <scope>FUNCTION</scope>
    <scope>IDENTIFICATION IN A DEUBIQUITINATION COMPLEX WITH TANK AND USP10</scope>
    <scope>INTERACTION WITH IKBKG; TANK; TRAF6 AND USP10</scope>
</reference>
<reference key="23">
    <citation type="journal article" date="2015" name="J. Biol. Chem.">
        <title>Monocyte chemotactic protein-induced protein 1 and 4 form a complex but act independently in regulation of interleukin-6 mRNA degradation.</title>
        <authorList>
            <person name="Huang S."/>
            <person name="Liu S."/>
            <person name="Fu J.J."/>
            <person name="Tony Wang T."/>
            <person name="Yao X."/>
            <person name="Kumar A."/>
            <person name="Liu G."/>
            <person name="Fu M."/>
        </authorList>
    </citation>
    <scope>FUNCTION AS AN ENDORIBONUCLEASE</scope>
    <scope>INTERACTION WITH TNRC6A AND ZC3H12D</scope>
    <scope>SUBCELLULAR LOCATION</scope>
    <scope>DOMAIN</scope>
    <scope>MUTAGENESIS OF ASP-141</scope>
</reference>
<reference key="24">
    <citation type="journal article" date="2012" name="Nucleic Acids Res.">
        <title>Structural study of MCPIP1 N-terminal conserved domain reveals a PIN-like RNase.</title>
        <authorList>
            <person name="Xu J."/>
            <person name="Peng W."/>
            <person name="Sun Y."/>
            <person name="Wang X."/>
            <person name="Xu Y."/>
            <person name="Li X."/>
            <person name="Gao G."/>
            <person name="Rao Z."/>
        </authorList>
    </citation>
    <scope>X-RAY CRYSTALLOGRAPHY (2.0 ANGSTROMS) OF 112-334</scope>
    <scope>FUNCTION AS AN ENDORIBONUCLEASE</scope>
    <scope>CATALYTIC REGION</scope>
    <scope>COFACTOR</scope>
    <scope>DOMAIN</scope>
    <scope>MUTAGENESIS OF ASP-141; ASN-144 AND ARG-214</scope>
    <scope>MAGNESIUM-BINDING SITE</scope>
</reference>
<name>ZC12A_HUMAN</name>
<accession>Q5D1E8</accession>
<accession>D3DPT0</accession>
<accession>Q6I9Z1</accession>
<accession>Q9H5P1</accession>
<evidence type="ECO:0000250" key="1">
    <source>
        <dbReference type="UniProtKB" id="Q5D1E7"/>
    </source>
</evidence>
<evidence type="ECO:0000255" key="2"/>
<evidence type="ECO:0000256" key="3">
    <source>
        <dbReference type="SAM" id="MobiDB-lite"/>
    </source>
</evidence>
<evidence type="ECO:0000269" key="4">
    <source>
    </source>
</evidence>
<evidence type="ECO:0000269" key="5">
    <source>
    </source>
</evidence>
<evidence type="ECO:0000269" key="6">
    <source>
    </source>
</evidence>
<evidence type="ECO:0000269" key="7">
    <source>
    </source>
</evidence>
<evidence type="ECO:0000269" key="8">
    <source>
    </source>
</evidence>
<evidence type="ECO:0000269" key="9">
    <source>
    </source>
</evidence>
<evidence type="ECO:0000269" key="10">
    <source>
    </source>
</evidence>
<evidence type="ECO:0000269" key="11">
    <source>
    </source>
</evidence>
<evidence type="ECO:0000269" key="12">
    <source>
    </source>
</evidence>
<evidence type="ECO:0000269" key="13">
    <source>
    </source>
</evidence>
<evidence type="ECO:0000269" key="14">
    <source>
    </source>
</evidence>
<evidence type="ECO:0000269" key="15">
    <source>
    </source>
</evidence>
<evidence type="ECO:0000269" key="16">
    <source>
    </source>
</evidence>
<evidence type="ECO:0000269" key="17">
    <source>
    </source>
</evidence>
<evidence type="ECO:0000269" key="18">
    <source>
    </source>
</evidence>
<evidence type="ECO:0000269" key="19">
    <source>
    </source>
</evidence>
<evidence type="ECO:0000269" key="20">
    <source>
    </source>
</evidence>
<evidence type="ECO:0000269" key="21">
    <source>
    </source>
</evidence>
<evidence type="ECO:0000269" key="22">
    <source>
    </source>
</evidence>
<evidence type="ECO:0000269" key="23">
    <source ref="3"/>
</evidence>
<evidence type="ECO:0000303" key="24">
    <source>
    </source>
</evidence>
<evidence type="ECO:0000303" key="25">
    <source>
    </source>
</evidence>
<evidence type="ECO:0000305" key="26"/>
<evidence type="ECO:0000305" key="27">
    <source>
    </source>
</evidence>
<evidence type="ECO:0000305" key="28">
    <source>
    </source>
</evidence>
<evidence type="ECO:0000312" key="29">
    <source>
        <dbReference type="EMBL" id="AAH05001.1"/>
    </source>
</evidence>
<evidence type="ECO:0000312" key="30">
    <source>
        <dbReference type="EMBL" id="AAX14017.1"/>
    </source>
</evidence>
<evidence type="ECO:0000312" key="31">
    <source>
        <dbReference type="EMBL" id="AL449284"/>
    </source>
</evidence>
<evidence type="ECO:0000312" key="32">
    <source>
        <dbReference type="EMBL" id="BAB15581.1"/>
    </source>
</evidence>
<evidence type="ECO:0000312" key="33">
    <source>
        <dbReference type="EMBL" id="CAG33645.1"/>
    </source>
</evidence>
<evidence type="ECO:0000312" key="34">
    <source>
        <dbReference type="HGNC" id="HGNC:26259"/>
    </source>
</evidence>
<evidence type="ECO:0007744" key="35">
    <source>
    </source>
</evidence>
<evidence type="ECO:0007829" key="36">
    <source>
        <dbReference type="PDB" id="3V32"/>
    </source>
</evidence>
<evidence type="ECO:0007829" key="37">
    <source>
        <dbReference type="PDB" id="3V33"/>
    </source>
</evidence>
<proteinExistence type="evidence at protein level"/>
<feature type="chain" id="PRO_0000341512" description="Endoribonuclease ZC3H12A">
    <location>
        <begin position="1"/>
        <end position="599"/>
    </location>
</feature>
<feature type="domain" description="RNase NYN" evidence="2">
    <location>
        <begin position="135"/>
        <end position="290"/>
    </location>
</feature>
<feature type="zinc finger region" description="C3H1-type">
    <location>
        <begin position="301"/>
        <end position="324"/>
    </location>
</feature>
<feature type="region of interest" description="Disordered" evidence="3">
    <location>
        <begin position="1"/>
        <end position="40"/>
    </location>
</feature>
<feature type="region of interest" description="Ubiquitin association domain" evidence="1">
    <location>
        <begin position="42"/>
        <end position="87"/>
    </location>
</feature>
<feature type="region of interest" description="Necessary for interaction with TANK" evidence="20">
    <location>
        <begin position="81"/>
        <end position="150"/>
    </location>
</feature>
<feature type="region of interest" description="Disordered" evidence="3">
    <location>
        <begin position="90"/>
        <end position="133"/>
    </location>
</feature>
<feature type="region of interest" description="RNase" evidence="28">
    <location>
        <begin position="112"/>
        <end position="297"/>
    </location>
</feature>
<feature type="region of interest" description="RNA binding" evidence="28">
    <location>
        <begin position="214"/>
        <end position="220"/>
    </location>
</feature>
<feature type="region of interest" description="Necessary for interaction with ZC3H12D" evidence="21">
    <location>
        <begin position="301"/>
        <end position="457"/>
    </location>
</feature>
<feature type="region of interest" description="Disordered" evidence="3">
    <location>
        <begin position="343"/>
        <end position="420"/>
    </location>
</feature>
<feature type="region of interest" description="Disordered" evidence="3">
    <location>
        <begin position="522"/>
        <end position="546"/>
    </location>
</feature>
<feature type="compositionally biased region" description="Low complexity" evidence="3">
    <location>
        <begin position="358"/>
        <end position="375"/>
    </location>
</feature>
<feature type="compositionally biased region" description="Polar residues" evidence="3">
    <location>
        <begin position="386"/>
        <end position="399"/>
    </location>
</feature>
<feature type="binding site" evidence="15">
    <location>
        <position position="226"/>
    </location>
    <ligand>
        <name>Mg(2+)</name>
        <dbReference type="ChEBI" id="CHEBI:18420"/>
    </ligand>
</feature>
<feature type="modified residue" description="Phosphoserine" evidence="35">
    <location>
        <position position="99"/>
    </location>
</feature>
<feature type="modified residue" description="Phosphoserine" evidence="35">
    <location>
        <position position="344"/>
    </location>
</feature>
<feature type="modified residue" description="Phosphoserine" evidence="1">
    <location>
        <position position="438"/>
    </location>
</feature>
<feature type="modified residue" description="Phosphoserine" evidence="1">
    <location>
        <position position="442"/>
    </location>
</feature>
<feature type="sequence variant" id="VAR_052968" description="In dbSNP:rs16824179.">
    <original>V</original>
    <variation>M</variation>
    <location>
        <position position="240"/>
    </location>
</feature>
<feature type="sequence variant" id="VAR_044082" description="In dbSNP:rs17849897." evidence="4 5 23">
    <original>G</original>
    <variation>D</variation>
    <location>
        <position position="547"/>
    </location>
</feature>
<feature type="mutagenesis site" description="Abolishes RNase activity." evidence="15">
    <original>D</original>
    <variation>N</variation>
    <location>
        <position position="141"/>
    </location>
</feature>
<feature type="mutagenesis site" description="Loss of pre-miRNA RNase activity. Attenuates strongly miRNA silencing activity. Loss of interleukin IL17A and IL6 mRNA instabilities. Reduces angiogenic differentiation. Loss of RNase activity on JEV and DEN viral RNAs and antiviral effects. Loss of HIV-1 antiviral activity. Loss of IL1B mRNA instability; when associated with A-226." evidence="11 14 17 19 21 22">
    <original>D</original>
    <variation>N</variation>
    <location>
        <position position="141"/>
    </location>
</feature>
<feature type="mutagenesis site" description="No change in RNase activity." evidence="15">
    <original>N</original>
    <variation>A</variation>
    <location>
        <position position="144"/>
    </location>
</feature>
<feature type="mutagenesis site" description="Does not inhibit antiviral effects." evidence="17">
    <original>C</original>
    <variation>A</variation>
    <location>
        <position position="157"/>
    </location>
</feature>
<feature type="mutagenesis site" description="Abolishes RNase activity." evidence="15">
    <original>R</original>
    <variation>A</variation>
    <location>
        <position position="214"/>
    </location>
</feature>
<feature type="mutagenesis site" description="Loss of pre-miRNA RNase activity, IL17A mRNA instability and antiviral effects; when associated with A-226." evidence="17 19 22">
    <original>D</original>
    <variation>A</variation>
    <location>
        <position position="225"/>
    </location>
</feature>
<feature type="mutagenesis site" description="Loss of pre-miRNA RNase activity, IL17A mRNA instability and antiviral effects; when associated with A-225. Loss of IL1B mRNA instability; when associated with N-141." evidence="11 17 19 22">
    <original>D</original>
    <variation>A</variation>
    <location>
        <position position="226"/>
    </location>
</feature>
<feature type="mutagenesis site" description="Loss of interleukin IL17A mRNA instability. Reduces weakly pre-miRNA RNase activity. Attenuates miRNA silencing activity. Does not inhibit binding to Japanese encephalitis virus (JEV) and dengue virus (DEN) RNAs and weakly attenuates antiviral effects. Loss of HIV-1 antiviral activity." evidence="14 17 19 22">
    <original>C</original>
    <variation>R</variation>
    <location>
        <position position="306"/>
    </location>
</feature>
<feature type="mutagenesis site" description="Inhibits transcriptional activity; when associated with G-312." evidence="6">
    <original>K</original>
    <variation>G</variation>
    <location>
        <position position="311"/>
    </location>
</feature>
<feature type="mutagenesis site" description="Inhibits transcriptional activity; when associated with G-311." evidence="6">
    <original>C</original>
    <variation>G</variation>
    <location>
        <position position="312"/>
    </location>
</feature>
<feature type="mutagenesis site" description="Inhibits transcriptional activity; when associated with G-318." evidence="6">
    <original>K</original>
    <variation>G</variation>
    <location>
        <position position="317"/>
    </location>
</feature>
<feature type="mutagenesis site" description="Inhibits transcriptional activity; when associated with G-317." evidence="6">
    <original>C</original>
    <variation>G</variation>
    <location>
        <position position="318"/>
    </location>
</feature>
<feature type="sequence conflict" description="In Ref. 3; CAG33645." evidence="26" ref="3">
    <original>D</original>
    <variation>G</variation>
    <location>
        <position position="248"/>
    </location>
</feature>
<feature type="sequence conflict" description="In Ref. 3; CAG33645." evidence="26" ref="3">
    <original>E</original>
    <variation>D</variation>
    <location>
        <position position="599"/>
    </location>
</feature>
<feature type="strand" evidence="36">
    <location>
        <begin position="138"/>
        <end position="141"/>
    </location>
</feature>
<feature type="helix" evidence="36">
    <location>
        <begin position="142"/>
        <end position="149"/>
    </location>
</feature>
<feature type="turn" evidence="36">
    <location>
        <begin position="150"/>
        <end position="153"/>
    </location>
</feature>
<feature type="strand" evidence="36">
    <location>
        <begin position="154"/>
        <end position="156"/>
    </location>
</feature>
<feature type="helix" evidence="36">
    <location>
        <begin position="157"/>
        <end position="169"/>
    </location>
</feature>
<feature type="strand" evidence="36">
    <location>
        <begin position="175"/>
        <end position="180"/>
    </location>
</feature>
<feature type="helix" evidence="36">
    <location>
        <begin position="181"/>
        <end position="184"/>
    </location>
</feature>
<feature type="strand" evidence="37">
    <location>
        <begin position="193"/>
        <end position="195"/>
    </location>
</feature>
<feature type="helix" evidence="36">
    <location>
        <begin position="197"/>
        <end position="204"/>
    </location>
</feature>
<feature type="strand" evidence="36">
    <location>
        <begin position="208"/>
        <end position="211"/>
    </location>
</feature>
<feature type="strand" evidence="37">
    <location>
        <begin position="213"/>
        <end position="216"/>
    </location>
</feature>
<feature type="strand" evidence="37">
    <location>
        <begin position="219"/>
        <end position="222"/>
    </location>
</feature>
<feature type="helix" evidence="36">
    <location>
        <begin position="225"/>
        <end position="235"/>
    </location>
</feature>
<feature type="strand" evidence="36">
    <location>
        <begin position="239"/>
        <end position="241"/>
    </location>
</feature>
<feature type="helix" evidence="36">
    <location>
        <begin position="247"/>
        <end position="252"/>
    </location>
</feature>
<feature type="helix" evidence="36">
    <location>
        <begin position="254"/>
        <end position="263"/>
    </location>
</feature>
<feature type="strand" evidence="36">
    <location>
        <begin position="268"/>
        <end position="270"/>
    </location>
</feature>
<feature type="strand" evidence="36">
    <location>
        <begin position="273"/>
        <end position="275"/>
    </location>
</feature>
<feature type="turn" evidence="36">
    <location>
        <begin position="280"/>
        <end position="283"/>
    </location>
</feature>
<feature type="helix" evidence="36">
    <location>
        <begin position="288"/>
        <end position="291"/>
    </location>
</feature>
<gene>
    <name evidence="34" type="primary">ZC3H12A</name>
    <name evidence="24" type="synonym">MCPIP</name>
    <name type="synonym">MCPIP1</name>
</gene>
<dbReference type="EC" id="3.1.-.-" evidence="14"/>
<dbReference type="EMBL" id="AY920403">
    <property type="protein sequence ID" value="AAX14017.1"/>
    <property type="molecule type" value="mRNA"/>
</dbReference>
<dbReference type="EMBL" id="AK026884">
    <property type="protein sequence ID" value="BAB15581.1"/>
    <property type="molecule type" value="mRNA"/>
</dbReference>
<dbReference type="EMBL" id="CR457364">
    <property type="protein sequence ID" value="CAG33645.1"/>
    <property type="molecule type" value="mRNA"/>
</dbReference>
<dbReference type="EMBL" id="AL034379">
    <property type="status" value="NOT_ANNOTATED_CDS"/>
    <property type="molecule type" value="Genomic_DNA"/>
</dbReference>
<dbReference type="EMBL" id="AL449284">
    <property type="status" value="NOT_ANNOTATED_CDS"/>
    <property type="molecule type" value="Genomic_DNA"/>
</dbReference>
<dbReference type="EMBL" id="CH471059">
    <property type="protein sequence ID" value="EAX07346.1"/>
    <property type="molecule type" value="Genomic_DNA"/>
</dbReference>
<dbReference type="EMBL" id="CH471059">
    <property type="protein sequence ID" value="EAX07347.1"/>
    <property type="molecule type" value="Genomic_DNA"/>
</dbReference>
<dbReference type="EMBL" id="BC005001">
    <property type="protein sequence ID" value="AAH05001.1"/>
    <property type="molecule type" value="mRNA"/>
</dbReference>
<dbReference type="CCDS" id="CCDS417.1"/>
<dbReference type="RefSeq" id="NP_001310479.1">
    <property type="nucleotide sequence ID" value="NM_001323550.2"/>
</dbReference>
<dbReference type="RefSeq" id="NP_079355.2">
    <property type="nucleotide sequence ID" value="NM_025079.3"/>
</dbReference>
<dbReference type="PDB" id="3V32">
    <property type="method" value="X-ray"/>
    <property type="resolution" value="2.00 A"/>
    <property type="chains" value="A/B=112-296"/>
</dbReference>
<dbReference type="PDB" id="3V33">
    <property type="method" value="X-ray"/>
    <property type="resolution" value="2.00 A"/>
    <property type="chains" value="A/B=112-334"/>
</dbReference>
<dbReference type="PDB" id="3V34">
    <property type="method" value="X-ray"/>
    <property type="resolution" value="2.00 A"/>
    <property type="chains" value="A/B=112-296"/>
</dbReference>
<dbReference type="PDBsum" id="3V32"/>
<dbReference type="PDBsum" id="3V33"/>
<dbReference type="PDBsum" id="3V34"/>
<dbReference type="SMR" id="Q5D1E8"/>
<dbReference type="BioGRID" id="123141">
    <property type="interactions" value="39"/>
</dbReference>
<dbReference type="CORUM" id="Q5D1E8"/>
<dbReference type="FunCoup" id="Q5D1E8">
    <property type="interactions" value="178"/>
</dbReference>
<dbReference type="IntAct" id="Q5D1E8">
    <property type="interactions" value="17"/>
</dbReference>
<dbReference type="MINT" id="Q5D1E8"/>
<dbReference type="STRING" id="9606.ENSP00000362179"/>
<dbReference type="iPTMnet" id="Q5D1E8"/>
<dbReference type="PhosphoSitePlus" id="Q5D1E8"/>
<dbReference type="BioMuta" id="ZC3H12A"/>
<dbReference type="DMDM" id="190479827"/>
<dbReference type="jPOST" id="Q5D1E8"/>
<dbReference type="MassIVE" id="Q5D1E8"/>
<dbReference type="PaxDb" id="9606-ENSP00000362179"/>
<dbReference type="PeptideAtlas" id="Q5D1E8"/>
<dbReference type="ProteomicsDB" id="62741"/>
<dbReference type="Pumba" id="Q5D1E8"/>
<dbReference type="Antibodypedia" id="31721">
    <property type="antibodies" value="194 antibodies from 34 providers"/>
</dbReference>
<dbReference type="DNASU" id="80149"/>
<dbReference type="Ensembl" id="ENST00000373087.7">
    <property type="protein sequence ID" value="ENSP00000362179.5"/>
    <property type="gene ID" value="ENSG00000163874.11"/>
</dbReference>
<dbReference type="GeneID" id="80149"/>
<dbReference type="KEGG" id="hsa:80149"/>
<dbReference type="MANE-Select" id="ENST00000373087.7">
    <property type="protein sequence ID" value="ENSP00000362179.5"/>
    <property type="RefSeq nucleotide sequence ID" value="NM_025079.3"/>
    <property type="RefSeq protein sequence ID" value="NP_079355.2"/>
</dbReference>
<dbReference type="UCSC" id="uc001cbb.5">
    <property type="organism name" value="human"/>
</dbReference>
<dbReference type="AGR" id="HGNC:26259"/>
<dbReference type="CTD" id="80149"/>
<dbReference type="DisGeNET" id="80149"/>
<dbReference type="GeneCards" id="ZC3H12A"/>
<dbReference type="HGNC" id="HGNC:26259">
    <property type="gene designation" value="ZC3H12A"/>
</dbReference>
<dbReference type="HPA" id="ENSG00000163874">
    <property type="expression patterns" value="Tissue enhanced (bone)"/>
</dbReference>
<dbReference type="MIM" id="610562">
    <property type="type" value="gene"/>
</dbReference>
<dbReference type="neXtProt" id="NX_Q5D1E8"/>
<dbReference type="OpenTargets" id="ENSG00000163874"/>
<dbReference type="PharmGKB" id="PA142670537"/>
<dbReference type="VEuPathDB" id="HostDB:ENSG00000163874"/>
<dbReference type="eggNOG" id="KOG3777">
    <property type="taxonomic scope" value="Eukaryota"/>
</dbReference>
<dbReference type="GeneTree" id="ENSGT00940000155107"/>
<dbReference type="HOGENOM" id="CLU_013020_2_1_1"/>
<dbReference type="InParanoid" id="Q5D1E8"/>
<dbReference type="OMA" id="DMWPYRS"/>
<dbReference type="OrthoDB" id="392925at2759"/>
<dbReference type="PAN-GO" id="Q5D1E8">
    <property type="GO annotations" value="7 GO annotations based on evolutionary models"/>
</dbReference>
<dbReference type="PhylomeDB" id="Q5D1E8"/>
<dbReference type="TreeFam" id="TF315783"/>
<dbReference type="PathwayCommons" id="Q5D1E8"/>
<dbReference type="Reactome" id="R-HSA-9764302">
    <property type="pathway name" value="Regulation of CDH19 Expression and Function"/>
</dbReference>
<dbReference type="SignaLink" id="Q5D1E8"/>
<dbReference type="SIGNOR" id="Q5D1E8"/>
<dbReference type="BioGRID-ORCS" id="80149">
    <property type="hits" value="14 hits in 1166 CRISPR screens"/>
</dbReference>
<dbReference type="ChiTaRS" id="ZC3H12A">
    <property type="organism name" value="human"/>
</dbReference>
<dbReference type="EvolutionaryTrace" id="Q5D1E8"/>
<dbReference type="GenomeRNAi" id="80149"/>
<dbReference type="Pharos" id="Q5D1E8">
    <property type="development level" value="Tbio"/>
</dbReference>
<dbReference type="PRO" id="PR:Q5D1E8"/>
<dbReference type="Proteomes" id="UP000005640">
    <property type="component" value="Chromosome 1"/>
</dbReference>
<dbReference type="RNAct" id="Q5D1E8">
    <property type="molecule type" value="protein"/>
</dbReference>
<dbReference type="Bgee" id="ENSG00000163874">
    <property type="expression patterns" value="Expressed in gall bladder and 126 other cell types or tissues"/>
</dbReference>
<dbReference type="ExpressionAtlas" id="Q5D1E8">
    <property type="expression patterns" value="baseline and differential"/>
</dbReference>
<dbReference type="GO" id="GO:0005737">
    <property type="term" value="C:cytoplasm"/>
    <property type="evidence" value="ECO:0000314"/>
    <property type="project" value="UniProtKB"/>
</dbReference>
<dbReference type="GO" id="GO:0036464">
    <property type="term" value="C:cytoplasmic ribonucleoprotein granule"/>
    <property type="evidence" value="ECO:0000314"/>
    <property type="project" value="HPA"/>
</dbReference>
<dbReference type="GO" id="GO:0005856">
    <property type="term" value="C:cytoskeleton"/>
    <property type="evidence" value="ECO:0000314"/>
    <property type="project" value="UniProtKB"/>
</dbReference>
<dbReference type="GO" id="GO:0005654">
    <property type="term" value="C:nucleoplasm"/>
    <property type="evidence" value="ECO:0000314"/>
    <property type="project" value="HPA"/>
</dbReference>
<dbReference type="GO" id="GO:0005634">
    <property type="term" value="C:nucleus"/>
    <property type="evidence" value="ECO:0000314"/>
    <property type="project" value="UniProtKB"/>
</dbReference>
<dbReference type="GO" id="GO:0000932">
    <property type="term" value="C:P-body"/>
    <property type="evidence" value="ECO:0000314"/>
    <property type="project" value="UniProtKB"/>
</dbReference>
<dbReference type="GO" id="GO:0032991">
    <property type="term" value="C:protein-containing complex"/>
    <property type="evidence" value="ECO:0000314"/>
    <property type="project" value="UniProtKB"/>
</dbReference>
<dbReference type="GO" id="GO:0030867">
    <property type="term" value="C:rough endoplasmic reticulum membrane"/>
    <property type="evidence" value="ECO:0000250"/>
    <property type="project" value="UniProtKB"/>
</dbReference>
<dbReference type="GO" id="GO:0003682">
    <property type="term" value="F:chromatin binding"/>
    <property type="evidence" value="ECO:0000314"/>
    <property type="project" value="UniProtKB"/>
</dbReference>
<dbReference type="GO" id="GO:0003677">
    <property type="term" value="F:DNA binding"/>
    <property type="evidence" value="ECO:0000314"/>
    <property type="project" value="UniProtKB"/>
</dbReference>
<dbReference type="GO" id="GO:0035198">
    <property type="term" value="F:miRNA binding"/>
    <property type="evidence" value="ECO:0000314"/>
    <property type="project" value="UniProtKB"/>
</dbReference>
<dbReference type="GO" id="GO:0035925">
    <property type="term" value="F:mRNA 3'-UTR AU-rich region binding"/>
    <property type="evidence" value="ECO:0000250"/>
    <property type="project" value="UniProtKB"/>
</dbReference>
<dbReference type="GO" id="GO:0003730">
    <property type="term" value="F:mRNA 3'-UTR binding"/>
    <property type="evidence" value="ECO:0000250"/>
    <property type="project" value="UniProtKB"/>
</dbReference>
<dbReference type="GO" id="GO:0003729">
    <property type="term" value="F:mRNA binding"/>
    <property type="evidence" value="ECO:0000314"/>
    <property type="project" value="UniProtKB"/>
</dbReference>
<dbReference type="GO" id="GO:0043022">
    <property type="term" value="F:ribosome binding"/>
    <property type="evidence" value="ECO:0000250"/>
    <property type="project" value="UniProtKB"/>
</dbReference>
<dbReference type="GO" id="GO:0003723">
    <property type="term" value="F:RNA binding"/>
    <property type="evidence" value="ECO:0000314"/>
    <property type="project" value="UniProtKB"/>
</dbReference>
<dbReference type="GO" id="GO:0004521">
    <property type="term" value="F:RNA endonuclease activity"/>
    <property type="evidence" value="ECO:0000250"/>
    <property type="project" value="UniProtKB"/>
</dbReference>
<dbReference type="GO" id="GO:0004532">
    <property type="term" value="F:RNA exonuclease activity"/>
    <property type="evidence" value="ECO:0000250"/>
    <property type="project" value="UniProtKB"/>
</dbReference>
<dbReference type="GO" id="GO:0004540">
    <property type="term" value="F:RNA nuclease activity"/>
    <property type="evidence" value="ECO:0000314"/>
    <property type="project" value="UniProtKB"/>
</dbReference>
<dbReference type="GO" id="GO:0035613">
    <property type="term" value="F:RNA stem-loop binding"/>
    <property type="evidence" value="ECO:0000250"/>
    <property type="project" value="UniProtKB"/>
</dbReference>
<dbReference type="GO" id="GO:0008270">
    <property type="term" value="F:zinc ion binding"/>
    <property type="evidence" value="ECO:0007669"/>
    <property type="project" value="UniProtKB-KW"/>
</dbReference>
<dbReference type="GO" id="GO:0061158">
    <property type="term" value="P:3'-UTR-mediated mRNA destabilization"/>
    <property type="evidence" value="ECO:0000314"/>
    <property type="project" value="UniProtKB"/>
</dbReference>
<dbReference type="GO" id="GO:0001525">
    <property type="term" value="P:angiogenesis"/>
    <property type="evidence" value="ECO:0007669"/>
    <property type="project" value="UniProtKB-KW"/>
</dbReference>
<dbReference type="GO" id="GO:0006915">
    <property type="term" value="P:apoptotic process"/>
    <property type="evidence" value="ECO:0007669"/>
    <property type="project" value="UniProtKB-KW"/>
</dbReference>
<dbReference type="GO" id="GO:0030154">
    <property type="term" value="P:cell differentiation"/>
    <property type="evidence" value="ECO:0007669"/>
    <property type="project" value="UniProtKB-KW"/>
</dbReference>
<dbReference type="GO" id="GO:1990869">
    <property type="term" value="P:cellular response to chemokine"/>
    <property type="evidence" value="ECO:0000314"/>
    <property type="project" value="UniProtKB"/>
</dbReference>
<dbReference type="GO" id="GO:0042149">
    <property type="term" value="P:cellular response to glucose starvation"/>
    <property type="evidence" value="ECO:0000250"/>
    <property type="project" value="UniProtKB"/>
</dbReference>
<dbReference type="GO" id="GO:0071347">
    <property type="term" value="P:cellular response to interleukin-1"/>
    <property type="evidence" value="ECO:0000250"/>
    <property type="project" value="UniProtKB"/>
</dbReference>
<dbReference type="GO" id="GO:1904637">
    <property type="term" value="P:cellular response to ionomycin"/>
    <property type="evidence" value="ECO:0000250"/>
    <property type="project" value="UniProtKB"/>
</dbReference>
<dbReference type="GO" id="GO:0071222">
    <property type="term" value="P:cellular response to lipopolysaccharide"/>
    <property type="evidence" value="ECO:0000314"/>
    <property type="project" value="UniProtKB"/>
</dbReference>
<dbReference type="GO" id="GO:0034599">
    <property type="term" value="P:cellular response to oxidative stress"/>
    <property type="evidence" value="ECO:0000250"/>
    <property type="project" value="UniProtKB"/>
</dbReference>
<dbReference type="GO" id="GO:1903936">
    <property type="term" value="P:cellular response to sodium arsenite"/>
    <property type="evidence" value="ECO:0000250"/>
    <property type="project" value="UniProtKB"/>
</dbReference>
<dbReference type="GO" id="GO:0071356">
    <property type="term" value="P:cellular response to tumor necrosis factor"/>
    <property type="evidence" value="ECO:0000314"/>
    <property type="project" value="UniProtKB"/>
</dbReference>
<dbReference type="GO" id="GO:0098586">
    <property type="term" value="P:cellular response to virus"/>
    <property type="evidence" value="ECO:0000314"/>
    <property type="project" value="UniProtKB"/>
</dbReference>
<dbReference type="GO" id="GO:0051607">
    <property type="term" value="P:defense response to virus"/>
    <property type="evidence" value="ECO:0007669"/>
    <property type="project" value="UniProtKB-KW"/>
</dbReference>
<dbReference type="GO" id="GO:0006974">
    <property type="term" value="P:DNA damage response"/>
    <property type="evidence" value="ECO:0000315"/>
    <property type="project" value="UniProtKB"/>
</dbReference>
<dbReference type="GO" id="GO:0002757">
    <property type="term" value="P:immune response-activating signaling pathway"/>
    <property type="evidence" value="ECO:0000314"/>
    <property type="project" value="UniProtKB"/>
</dbReference>
<dbReference type="GO" id="GO:0006954">
    <property type="term" value="P:inflammatory response"/>
    <property type="evidence" value="ECO:0007669"/>
    <property type="project" value="UniProtKB-KW"/>
</dbReference>
<dbReference type="GO" id="GO:0010587">
    <property type="term" value="P:miRNA catabolic process"/>
    <property type="evidence" value="ECO:0000314"/>
    <property type="project" value="UniProtKB"/>
</dbReference>
<dbReference type="GO" id="GO:0044828">
    <property type="term" value="P:negative regulation by host of viral genome replication"/>
    <property type="evidence" value="ECO:0000314"/>
    <property type="project" value="UniProtKB"/>
</dbReference>
<dbReference type="GO" id="GO:0043124">
    <property type="term" value="P:negative regulation of canonical NF-kappaB signal transduction"/>
    <property type="evidence" value="ECO:0000314"/>
    <property type="project" value="BHF-UCL"/>
</dbReference>
<dbReference type="GO" id="GO:0055118">
    <property type="term" value="P:negative regulation of cardiac muscle contraction"/>
    <property type="evidence" value="ECO:0000250"/>
    <property type="project" value="UniProtKB"/>
</dbReference>
<dbReference type="GO" id="GO:1900016">
    <property type="term" value="P:negative regulation of cytokine production involved in inflammatory response"/>
    <property type="evidence" value="ECO:0000250"/>
    <property type="project" value="UniProtKB"/>
</dbReference>
<dbReference type="GO" id="GO:0032691">
    <property type="term" value="P:negative regulation of interleukin-1 beta production"/>
    <property type="evidence" value="ECO:0000250"/>
    <property type="project" value="UniProtKB"/>
</dbReference>
<dbReference type="GO" id="GO:0032715">
    <property type="term" value="P:negative regulation of interleukin-6 production"/>
    <property type="evidence" value="ECO:0000314"/>
    <property type="project" value="BHF-UCL"/>
</dbReference>
<dbReference type="GO" id="GO:0043031">
    <property type="term" value="P:negative regulation of macrophage activation"/>
    <property type="evidence" value="ECO:0000314"/>
    <property type="project" value="BHF-UCL"/>
</dbReference>
<dbReference type="GO" id="GO:0010656">
    <property type="term" value="P:negative regulation of muscle cell apoptotic process"/>
    <property type="evidence" value="ECO:0000250"/>
    <property type="project" value="UniProtKB"/>
</dbReference>
<dbReference type="GO" id="GO:0045019">
    <property type="term" value="P:negative regulation of nitric oxide biosynthetic process"/>
    <property type="evidence" value="ECO:0000314"/>
    <property type="project" value="BHF-UCL"/>
</dbReference>
<dbReference type="GO" id="GO:1901223">
    <property type="term" value="P:negative regulation of non-canonical NF-kappaB signal transduction"/>
    <property type="evidence" value="ECO:0000250"/>
    <property type="project" value="UniProtKB"/>
</dbReference>
<dbReference type="GO" id="GO:0001933">
    <property type="term" value="P:negative regulation of protein phosphorylation"/>
    <property type="evidence" value="ECO:0000250"/>
    <property type="project" value="UniProtKB"/>
</dbReference>
<dbReference type="GO" id="GO:2000320">
    <property type="term" value="P:negative regulation of T-helper 17 cell differentiation"/>
    <property type="evidence" value="ECO:0000250"/>
    <property type="project" value="UniProtKB"/>
</dbReference>
<dbReference type="GO" id="GO:0000122">
    <property type="term" value="P:negative regulation of transcription by RNA polymerase II"/>
    <property type="evidence" value="ECO:0000314"/>
    <property type="project" value="BHF-UCL"/>
</dbReference>
<dbReference type="GO" id="GO:0032720">
    <property type="term" value="P:negative regulation of tumor necrosis factor production"/>
    <property type="evidence" value="ECO:0000314"/>
    <property type="project" value="BHF-UCL"/>
</dbReference>
<dbReference type="GO" id="GO:0032689">
    <property type="term" value="P:negative regulation of type II interferon production"/>
    <property type="evidence" value="ECO:0000250"/>
    <property type="project" value="UniProtKB"/>
</dbReference>
<dbReference type="GO" id="GO:0007399">
    <property type="term" value="P:nervous system development"/>
    <property type="evidence" value="ECO:0007669"/>
    <property type="project" value="UniProtKB-KW"/>
</dbReference>
<dbReference type="GO" id="GO:0000184">
    <property type="term" value="P:nuclear-transcribed mRNA catabolic process, nonsense-mediated decay"/>
    <property type="evidence" value="ECO:0000250"/>
    <property type="project" value="UniProtKB"/>
</dbReference>
<dbReference type="GO" id="GO:0045766">
    <property type="term" value="P:positive regulation of angiogenesis"/>
    <property type="evidence" value="ECO:0000314"/>
    <property type="project" value="UniProtKB"/>
</dbReference>
<dbReference type="GO" id="GO:0010508">
    <property type="term" value="P:positive regulation of autophagy"/>
    <property type="evidence" value="ECO:0000314"/>
    <property type="project" value="BHF-UCL"/>
</dbReference>
<dbReference type="GO" id="GO:0002230">
    <property type="term" value="P:positive regulation of defense response to virus by host"/>
    <property type="evidence" value="ECO:0000314"/>
    <property type="project" value="UniProtKB"/>
</dbReference>
<dbReference type="GO" id="GO:0010595">
    <property type="term" value="P:positive regulation of endothelial cell migration"/>
    <property type="evidence" value="ECO:0000314"/>
    <property type="project" value="UniProtKB"/>
</dbReference>
<dbReference type="GO" id="GO:1900119">
    <property type="term" value="P:positive regulation of execution phase of apoptosis"/>
    <property type="evidence" value="ECO:0000250"/>
    <property type="project" value="UniProtKB"/>
</dbReference>
<dbReference type="GO" id="GO:0045600">
    <property type="term" value="P:positive regulation of fat cell differentiation"/>
    <property type="evidence" value="ECO:0000314"/>
    <property type="project" value="BHF-UCL"/>
</dbReference>
<dbReference type="GO" id="GO:0010628">
    <property type="term" value="P:positive regulation of gene expression"/>
    <property type="evidence" value="ECO:0000314"/>
    <property type="project" value="BHF-UCL"/>
</dbReference>
<dbReference type="GO" id="GO:0010884">
    <property type="term" value="P:positive regulation of lipid storage"/>
    <property type="evidence" value="ECO:0000314"/>
    <property type="project" value="BHF-UCL"/>
</dbReference>
<dbReference type="GO" id="GO:2000627">
    <property type="term" value="P:positive regulation of miRNA catabolic process"/>
    <property type="evidence" value="ECO:0000314"/>
    <property type="project" value="UniProtKB"/>
</dbReference>
<dbReference type="GO" id="GO:0061014">
    <property type="term" value="P:positive regulation of mRNA catabolic process"/>
    <property type="evidence" value="ECO:0000314"/>
    <property type="project" value="UniProtKB"/>
</dbReference>
<dbReference type="GO" id="GO:1900745">
    <property type="term" value="P:positive regulation of p38MAPK cascade"/>
    <property type="evidence" value="ECO:0000314"/>
    <property type="project" value="UniProtKB"/>
</dbReference>
<dbReference type="GO" id="GO:1903003">
    <property type="term" value="P:positive regulation of protein deubiquitination"/>
    <property type="evidence" value="ECO:0000315"/>
    <property type="project" value="UniProtKB"/>
</dbReference>
<dbReference type="GO" id="GO:0042307">
    <property type="term" value="P:positive regulation of protein import into nucleus"/>
    <property type="evidence" value="ECO:0000314"/>
    <property type="project" value="UniProtKB"/>
</dbReference>
<dbReference type="GO" id="GO:2000379">
    <property type="term" value="P:positive regulation of reactive oxygen species metabolic process"/>
    <property type="evidence" value="ECO:0000314"/>
    <property type="project" value="BHF-UCL"/>
</dbReference>
<dbReference type="GO" id="GO:0045944">
    <property type="term" value="P:positive regulation of transcription by RNA polymerase II"/>
    <property type="evidence" value="ECO:0000314"/>
    <property type="project" value="UniProtKB"/>
</dbReference>
<dbReference type="GO" id="GO:0051259">
    <property type="term" value="P:protein complex oligomerization"/>
    <property type="evidence" value="ECO:0000314"/>
    <property type="project" value="UniProtKB"/>
</dbReference>
<dbReference type="GO" id="GO:0016579">
    <property type="term" value="P:protein deubiquitination"/>
    <property type="evidence" value="ECO:0000314"/>
    <property type="project" value="UniProtKB"/>
</dbReference>
<dbReference type="GO" id="GO:0010468">
    <property type="term" value="P:regulation of gene expression"/>
    <property type="evidence" value="ECO:0000314"/>
    <property type="project" value="UniProtKB"/>
</dbReference>
<dbReference type="GO" id="GO:0050852">
    <property type="term" value="P:T cell receptor signaling pathway"/>
    <property type="evidence" value="ECO:0000250"/>
    <property type="project" value="UniProtKB"/>
</dbReference>
<dbReference type="CDD" id="cd18729">
    <property type="entry name" value="PIN_Zc3h12-like"/>
    <property type="match status" value="1"/>
</dbReference>
<dbReference type="FunFam" id="3.40.50.11980:FF:000001">
    <property type="entry name" value="ZC3H12A isoform 1"/>
    <property type="match status" value="1"/>
</dbReference>
<dbReference type="Gene3D" id="3.40.50.11980">
    <property type="match status" value="1"/>
</dbReference>
<dbReference type="InterPro" id="IPR040546">
    <property type="entry name" value="Rege-1_UBA-like"/>
</dbReference>
<dbReference type="InterPro" id="IPR040757">
    <property type="entry name" value="Regnase_1/ZC3H12_C"/>
</dbReference>
<dbReference type="InterPro" id="IPR021869">
    <property type="entry name" value="RNase_Zc3h12_NYN"/>
</dbReference>
<dbReference type="InterPro" id="IPR051101">
    <property type="entry name" value="ZC3H12/N4BP1_RNase_Reg"/>
</dbReference>
<dbReference type="PANTHER" id="PTHR12876:SF10">
    <property type="entry name" value="ENDORIBONUCLEASE ZC3H12A"/>
    <property type="match status" value="1"/>
</dbReference>
<dbReference type="PANTHER" id="PTHR12876">
    <property type="entry name" value="N4BP1-RELATED"/>
    <property type="match status" value="1"/>
</dbReference>
<dbReference type="Pfam" id="PF18561">
    <property type="entry name" value="Regnase_1_C"/>
    <property type="match status" value="1"/>
</dbReference>
<dbReference type="Pfam" id="PF11977">
    <property type="entry name" value="RNase_Zc3h12a"/>
    <property type="match status" value="1"/>
</dbReference>
<dbReference type="Pfam" id="PF18039">
    <property type="entry name" value="UBA_6"/>
    <property type="match status" value="1"/>
</dbReference>
<protein>
    <recommendedName>
        <fullName evidence="26">Endoribonuclease ZC3H12A</fullName>
        <ecNumber evidence="14">3.1.-.-</ecNumber>
    </recommendedName>
    <alternativeName>
        <fullName evidence="24">Monocyte chemotactic protein-induced protein 1</fullName>
        <shortName evidence="24">MCP-induced protein 1</shortName>
        <shortName evidence="24">MCPIP-1</shortName>
    </alternativeName>
    <alternativeName>
        <fullName evidence="25">Regnase-1</fullName>
        <shortName evidence="1">Reg1</shortName>
    </alternativeName>
    <alternativeName>
        <fullName evidence="34">Zinc finger CCCH domain-containing protein 12A</fullName>
    </alternativeName>
</protein>
<sequence length="599" mass="65699">MSGPCGEKPVLEASPTMSLWEFEDSHSRQGTPRPGQELAAEEASALELQMKVDFFRKLGYSSTEIHSVLQKLGVQADTNTVLGELVKHGTATERERQTSPDPCPQLPLVPRGGGTPKAPNLEPPLPEEEKEGSDLRPVVIDGSNVAMSHGNKEVFSCRGILLAVNWFLERGHTDITVFVPSWRKEQPRPDVPITDQHILRELEKKKILVFTPSRRVGGKRVVCYDDRFIVKLAYESDGIVVSNDTYRDLQGERQEWKRFIEERLLMYSFVNDKFMPPDDPLGRHGPSLDNFLRKKPLTLEHRKQPCPYGRKCTYGIKCRFFHPERPSCPQRSVADELRANALLSPPRAPSKDKNGRRPSPSSQSSSLLTESEQCSLDGKKLGAQASPGSRQEGLTQTYAPSGRSLAPSGGSGSSFGPTDWLPQTLDSLPYVSQDCLDSGIGSLESQMSELWGVRGGGPGEPGPPRAPYTGYSPYGSELPATAAFSAFGRAMGAGHFSVPADYPPAPPAFPPREYWSEPYPLPPPTSVLQEPPVQSPGAGRSPWGRAGSLAKEQASVYTKLCGVFPPHLVEAVMGRFPQLLDPQQLAAEILSYKSQHPSE</sequence>